<feature type="chain" id="PRO_0000094907" description="Tyrosine-protein phosphatase 19">
    <location>
        <begin position="1" status="less than"/>
        <end position="115" status="greater than"/>
    </location>
</feature>
<feature type="domain" description="Tyrosine-protein phosphatase" evidence="2">
    <location>
        <begin position="1" status="less than"/>
        <end position="115" status="greater than"/>
    </location>
</feature>
<feature type="binding site" evidence="1">
    <location>
        <position position="83"/>
    </location>
    <ligand>
        <name>substrate</name>
    </ligand>
</feature>
<feature type="non-terminal residue">
    <location>
        <position position="1"/>
    </location>
</feature>
<feature type="non-terminal residue">
    <location>
        <position position="115"/>
    </location>
</feature>
<comment type="catalytic activity">
    <reaction evidence="3">
        <text>O-phospho-L-tyrosyl-[protein] + H2O = L-tyrosyl-[protein] + phosphate</text>
        <dbReference type="Rhea" id="RHEA:10684"/>
        <dbReference type="Rhea" id="RHEA-COMP:10136"/>
        <dbReference type="Rhea" id="RHEA-COMP:20101"/>
        <dbReference type="ChEBI" id="CHEBI:15377"/>
        <dbReference type="ChEBI" id="CHEBI:43474"/>
        <dbReference type="ChEBI" id="CHEBI:46858"/>
        <dbReference type="ChEBI" id="CHEBI:61978"/>
        <dbReference type="EC" id="3.1.3.48"/>
    </reaction>
</comment>
<comment type="similarity">
    <text evidence="4">Belongs to the protein-tyrosine phosphatase family.</text>
</comment>
<dbReference type="EC" id="3.1.3.48"/>
<dbReference type="EMBL" id="M38004">
    <property type="protein sequence ID" value="AAA29837.1"/>
    <property type="molecule type" value="mRNA"/>
</dbReference>
<dbReference type="SMR" id="P28211"/>
<dbReference type="GO" id="GO:0004725">
    <property type="term" value="F:protein tyrosine phosphatase activity"/>
    <property type="evidence" value="ECO:0007669"/>
    <property type="project" value="UniProtKB-EC"/>
</dbReference>
<dbReference type="CDD" id="cd00047">
    <property type="entry name" value="PTPc"/>
    <property type="match status" value="1"/>
</dbReference>
<dbReference type="Gene3D" id="3.90.190.10">
    <property type="entry name" value="Protein tyrosine phosphatase superfamily"/>
    <property type="match status" value="1"/>
</dbReference>
<dbReference type="InterPro" id="IPR029021">
    <property type="entry name" value="Prot-tyrosine_phosphatase-like"/>
</dbReference>
<dbReference type="InterPro" id="IPR050348">
    <property type="entry name" value="Protein-Tyr_Phosphatase"/>
</dbReference>
<dbReference type="InterPro" id="IPR000242">
    <property type="entry name" value="PTP_cat"/>
</dbReference>
<dbReference type="PANTHER" id="PTHR19134:SF562">
    <property type="entry name" value="PROTEIN-TYROSINE-PHOSPHATASE"/>
    <property type="match status" value="1"/>
</dbReference>
<dbReference type="PANTHER" id="PTHR19134">
    <property type="entry name" value="RECEPTOR-TYPE TYROSINE-PROTEIN PHOSPHATASE"/>
    <property type="match status" value="1"/>
</dbReference>
<dbReference type="Pfam" id="PF00102">
    <property type="entry name" value="Y_phosphatase"/>
    <property type="match status" value="1"/>
</dbReference>
<dbReference type="SUPFAM" id="SSF52799">
    <property type="entry name" value="(Phosphotyrosine protein) phosphatases II"/>
    <property type="match status" value="1"/>
</dbReference>
<dbReference type="PROSITE" id="PS50055">
    <property type="entry name" value="TYR_PHOSPHATASE_PTP"/>
    <property type="match status" value="1"/>
</dbReference>
<accession>P28211</accession>
<gene>
    <name type="primary">STY-19</name>
</gene>
<evidence type="ECO:0000250" key="1"/>
<evidence type="ECO:0000255" key="2">
    <source>
        <dbReference type="PROSITE-ProRule" id="PRU00160"/>
    </source>
</evidence>
<evidence type="ECO:0000255" key="3">
    <source>
        <dbReference type="PROSITE-ProRule" id="PRU10044"/>
    </source>
</evidence>
<evidence type="ECO:0000305" key="4"/>
<protein>
    <recommendedName>
        <fullName>Tyrosine-protein phosphatase 19</fullName>
        <ecNumber>3.1.3.48</ecNumber>
    </recommendedName>
</protein>
<sequence length="115" mass="13602">WLMIVEQKCRVIVMLAKCFEAGKKKCQKYWSDSKETKKFGRVKVFNAEEVKYCGFLRRKFLIESVDEGITMKVFQYQYINWPDHCVPNTTSNLVRMHKYVIQCFEETGSDAPMVV</sequence>
<keyword id="KW-0378">Hydrolase</keyword>
<keyword id="KW-0904">Protein phosphatase</keyword>
<name>PTP19_STYPL</name>
<organism>
    <name type="scientific">Styela plicata</name>
    <name type="common">Wrinkled sea squirt</name>
    <name type="synonym">Ascidia plicata</name>
    <dbReference type="NCBI Taxonomy" id="7726"/>
    <lineage>
        <taxon>Eukaryota</taxon>
        <taxon>Metazoa</taxon>
        <taxon>Chordata</taxon>
        <taxon>Tunicata</taxon>
        <taxon>Ascidiacea</taxon>
        <taxon>Stolidobranchia</taxon>
        <taxon>Styelidae</taxon>
        <taxon>Styela</taxon>
    </lineage>
</organism>
<proteinExistence type="evidence at transcript level"/>
<reference key="1">
    <citation type="journal article" date="1991" name="Immunogenetics">
        <title>Protein tyrosine phosphatase domains from the protochordate Styela plicata.</title>
        <authorList>
            <person name="Matthews R.J."/>
            <person name="Flores E."/>
            <person name="Thomas M.L."/>
        </authorList>
    </citation>
    <scope>NUCLEOTIDE SEQUENCE [MRNA]</scope>
</reference>